<sequence length="298" mass="34061">MSGELANYKRLEKVGEGTYGVVYKALDLRPGQGQRVVALKKIRLESEDEGVPSTAIREISLLKELKDDNIVRLYDIVHSDAHKLYLVFEFLDLDLKRYMEGIPKDQPLGADIVKKFMMQLCKGIAYCHSHRILHRDLKPQNLLINKDGNLKLGDFGLARAFGVPLRAYTHEIVTLWYRAPEVLLGGKQYSTGVDTWSIGCIFAEMCNRKPIFSGDSEIDQIFKIFRVLGTPNEAIWPDIVYLPDFKPSFPQWRRKDLSQVVPSLDPRGIDLLDKLLAYDPINRISARRAAIHPYFQES</sequence>
<gene>
    <name evidence="12" type="primary">CDC28</name>
    <name type="synonym">CDK1</name>
    <name type="synonym">HSL5</name>
    <name type="synonym">SRM5</name>
    <name evidence="14" type="ordered locus">YBR160W</name>
    <name type="ORF">YBR1211</name>
</gene>
<evidence type="ECO:0000250" key="1">
    <source>
        <dbReference type="UniProtKB" id="P04551"/>
    </source>
</evidence>
<evidence type="ECO:0000250" key="2">
    <source>
        <dbReference type="UniProtKB" id="P06493"/>
    </source>
</evidence>
<evidence type="ECO:0000250" key="3">
    <source>
        <dbReference type="UniProtKB" id="P24941"/>
    </source>
</evidence>
<evidence type="ECO:0000255" key="4">
    <source>
        <dbReference type="PROSITE-ProRule" id="PRU00159"/>
    </source>
</evidence>
<evidence type="ECO:0000255" key="5">
    <source>
        <dbReference type="PROSITE-ProRule" id="PRU10027"/>
    </source>
</evidence>
<evidence type="ECO:0000269" key="6">
    <source>
    </source>
</evidence>
<evidence type="ECO:0000269" key="7">
    <source>
    </source>
</evidence>
<evidence type="ECO:0000269" key="8">
    <source>
    </source>
</evidence>
<evidence type="ECO:0000269" key="9">
    <source>
    </source>
</evidence>
<evidence type="ECO:0000269" key="10">
    <source>
    </source>
</evidence>
<evidence type="ECO:0000303" key="11">
    <source>
    </source>
</evidence>
<evidence type="ECO:0000303" key="12">
    <source>
    </source>
</evidence>
<evidence type="ECO:0000305" key="13"/>
<evidence type="ECO:0000312" key="14">
    <source>
        <dbReference type="SGD" id="S000000364"/>
    </source>
</evidence>
<evidence type="ECO:0007744" key="15">
    <source>
    </source>
</evidence>
<evidence type="ECO:0007744" key="16">
    <source>
    </source>
</evidence>
<feature type="initiator methionine" description="Removed" evidence="16">
    <location>
        <position position="1"/>
    </location>
</feature>
<feature type="chain" id="PRO_0000085722" description="Cyclin-dependent kinase 1">
    <location>
        <begin position="2"/>
        <end position="298"/>
    </location>
</feature>
<feature type="domain" description="Protein kinase" evidence="4">
    <location>
        <begin position="8"/>
        <end position="295"/>
    </location>
</feature>
<feature type="active site" description="Proton acceptor" evidence="4 5">
    <location>
        <position position="136"/>
    </location>
</feature>
<feature type="binding site" evidence="4">
    <location>
        <begin position="14"/>
        <end position="22"/>
    </location>
    <ligand>
        <name>ATP</name>
        <dbReference type="ChEBI" id="CHEBI:30616"/>
    </ligand>
</feature>
<feature type="binding site" evidence="4">
    <location>
        <position position="40"/>
    </location>
    <ligand>
        <name>ATP</name>
        <dbReference type="ChEBI" id="CHEBI:30616"/>
    </ligand>
</feature>
<feature type="modified residue" description="N-acetylserine" evidence="16">
    <location>
        <position position="2"/>
    </location>
</feature>
<feature type="modified residue" description="Phosphotyrosine" evidence="15">
    <location>
        <position position="19"/>
    </location>
</feature>
<feature type="modified residue" description="Phosphothreonine" evidence="15">
    <location>
        <position position="169"/>
    </location>
</feature>
<comment type="function">
    <text evidence="1 7 8 9 10">Cyclin-dependent kinase that acts as a master regulator of the mitotic and meiotic cell cycles (By similarity). Required to drive the G1-S transition (PubMed:2664468). More than 200 substrates have been identified (PubMed:14574415). Substrate specificity is in part regulated by the bound cyclin protein (By similarity). Phosphorylates YTA7 during S-phase to promote transcription of histones (PubMed:22156209). May phosphorylate CNN1, to contribute to the enrichment of CNN1 on anaphase kinetochores (PubMed:22561345).</text>
</comment>
<comment type="catalytic activity">
    <reaction evidence="3">
        <text>L-seryl-[protein] + ATP = O-phospho-L-seryl-[protein] + ADP + H(+)</text>
        <dbReference type="Rhea" id="RHEA:17989"/>
        <dbReference type="Rhea" id="RHEA-COMP:9863"/>
        <dbReference type="Rhea" id="RHEA-COMP:11604"/>
        <dbReference type="ChEBI" id="CHEBI:15378"/>
        <dbReference type="ChEBI" id="CHEBI:29999"/>
        <dbReference type="ChEBI" id="CHEBI:30616"/>
        <dbReference type="ChEBI" id="CHEBI:83421"/>
        <dbReference type="ChEBI" id="CHEBI:456216"/>
        <dbReference type="EC" id="2.7.11.22"/>
    </reaction>
</comment>
<comment type="catalytic activity">
    <reaction evidence="1">
        <text>L-threonyl-[protein] + ATP = O-phospho-L-threonyl-[protein] + ADP + H(+)</text>
        <dbReference type="Rhea" id="RHEA:46608"/>
        <dbReference type="Rhea" id="RHEA-COMP:11060"/>
        <dbReference type="Rhea" id="RHEA-COMP:11605"/>
        <dbReference type="ChEBI" id="CHEBI:15378"/>
        <dbReference type="ChEBI" id="CHEBI:30013"/>
        <dbReference type="ChEBI" id="CHEBI:30616"/>
        <dbReference type="ChEBI" id="CHEBI:61977"/>
        <dbReference type="ChEBI" id="CHEBI:456216"/>
        <dbReference type="EC" id="2.7.11.22"/>
    </reaction>
</comment>
<comment type="activity regulation">
    <text evidence="2">Phosphorylation at Thr-18 or Tyr-19 inactivates the enzyme, while phosphorylation at Thr-169 activates it.</text>
</comment>
<comment type="subunit">
    <text evidence="10">Forms a stable but non-covalent complex with the CKS1 protein and with a cyclin.</text>
</comment>
<comment type="interaction">
    <interactant intactId="EBI-4253">
        <id>P00546</id>
    </interactant>
    <interactant intactId="EBI-3953">
        <id>P43568</id>
        <label>CAK1</label>
    </interactant>
    <organismsDiffer>false</organismsDiffer>
    <experiments>3</experiments>
</comment>
<comment type="interaction">
    <interactant intactId="EBI-4253">
        <id>P00546</id>
    </interactant>
    <interactant intactId="EBI-4447">
        <id>P09119</id>
        <label>CDC6</label>
    </interactant>
    <organismsDiffer>false</organismsDiffer>
    <experiments>2</experiments>
</comment>
<comment type="interaction">
    <interactant intactId="EBI-4253">
        <id>P00546</id>
    </interactant>
    <interactant intactId="EBI-4746">
        <id>P20486</id>
        <label>CKS1</label>
    </interactant>
    <organismsDiffer>false</organismsDiffer>
    <experiments>9</experiments>
</comment>
<comment type="interaction">
    <interactant intactId="EBI-4253">
        <id>P00546</id>
    </interactant>
    <interactant intactId="EBI-4538">
        <id>P30283</id>
        <label>CLB5</label>
    </interactant>
    <organismsDiffer>false</organismsDiffer>
    <experiments>6</experiments>
</comment>
<comment type="interaction">
    <interactant intactId="EBI-4253">
        <id>P00546</id>
    </interactant>
    <interactant intactId="EBI-2049771">
        <id>P32943</id>
        <label>CLB6</label>
    </interactant>
    <organismsDiffer>false</organismsDiffer>
    <experiments>3</experiments>
</comment>
<comment type="interaction">
    <interactant intactId="EBI-4253">
        <id>P00546</id>
    </interactant>
    <interactant intactId="EBI-4479">
        <id>P20437</id>
        <label>CLN1</label>
    </interactant>
    <organismsDiffer>false</organismsDiffer>
    <experiments>7</experiments>
</comment>
<comment type="interaction">
    <interactant intactId="EBI-4253">
        <id>P00546</id>
    </interactant>
    <interactant intactId="EBI-4483">
        <id>P20438</id>
        <label>CLN2</label>
    </interactant>
    <organismsDiffer>false</organismsDiffer>
    <experiments>10</experiments>
</comment>
<comment type="interaction">
    <interactant intactId="EBI-4253">
        <id>P00546</id>
    </interactant>
    <interactant intactId="EBI-4490">
        <id>P13365</id>
        <label>CLN3</label>
    </interactant>
    <organismsDiffer>false</organismsDiffer>
    <experiments>6</experiments>
</comment>
<comment type="interaction">
    <interactant intactId="EBI-4253">
        <id>P00546</id>
    </interactant>
    <interactant intactId="EBI-617698">
        <id>P03070</id>
    </interactant>
    <organismsDiffer>true</organismsDiffer>
    <experiments>3</experiments>
</comment>
<comment type="miscellaneous">
    <text evidence="6">Present with 6670 molecules/cell in log phase SD medium.</text>
</comment>
<comment type="similarity">
    <text evidence="13">Belongs to the protein kinase superfamily. CMGC Ser/Thr protein kinase family. CDC2/CDKX subfamily.</text>
</comment>
<dbReference type="EC" id="2.7.11.22" evidence="1"/>
<dbReference type="EMBL" id="X00257">
    <property type="protein sequence ID" value="CAA25065.1"/>
    <property type="molecule type" value="Genomic_DNA"/>
</dbReference>
<dbReference type="EMBL" id="Z36029">
    <property type="protein sequence ID" value="CAA85119.1"/>
    <property type="molecule type" value="Genomic_DNA"/>
</dbReference>
<dbReference type="EMBL" id="X80224">
    <property type="protein sequence ID" value="CAA56509.1"/>
    <property type="molecule type" value="Genomic_DNA"/>
</dbReference>
<dbReference type="EMBL" id="BK006936">
    <property type="protein sequence ID" value="DAA07275.1"/>
    <property type="molecule type" value="Genomic_DNA"/>
</dbReference>
<dbReference type="PIR" id="A00657">
    <property type="entry name" value="TVBY8"/>
</dbReference>
<dbReference type="RefSeq" id="NP_009718.3">
    <property type="nucleotide sequence ID" value="NM_001178508.3"/>
</dbReference>
<dbReference type="SMR" id="P00546"/>
<dbReference type="BioGRID" id="32859">
    <property type="interactions" value="1583"/>
</dbReference>
<dbReference type="ComplexPortal" id="CPX-1699">
    <property type="entry name" value="CLN1-CDC28 kinase complex"/>
</dbReference>
<dbReference type="ComplexPortal" id="CPX-1700">
    <property type="entry name" value="CLN3-CDC28 kinase complex"/>
</dbReference>
<dbReference type="ComplexPortal" id="CPX-1701">
    <property type="entry name" value="CLB2-CDC28 kinase complex"/>
</dbReference>
<dbReference type="ComplexPortal" id="CPX-1702">
    <property type="entry name" value="CLB5-CDC28 kinase complex"/>
</dbReference>
<dbReference type="ComplexPortal" id="CPX-335">
    <property type="entry name" value="CLB1-CDC28 kinase complex"/>
</dbReference>
<dbReference type="ComplexPortal" id="CPX-336">
    <property type="entry name" value="CLB3-CDC28 kinase complex"/>
</dbReference>
<dbReference type="ComplexPortal" id="CPX-337">
    <property type="entry name" value="CLB4-CDC28 kinase complex"/>
</dbReference>
<dbReference type="ComplexPortal" id="CPX-339">
    <property type="entry name" value="CLB6-CDC28 kinase complex"/>
</dbReference>
<dbReference type="ComplexPortal" id="CPX-342">
    <property type="entry name" value="CLN2-CDC28 kinase complex"/>
</dbReference>
<dbReference type="DIP" id="DIP-1039N"/>
<dbReference type="FunCoup" id="P00546">
    <property type="interactions" value="1394"/>
</dbReference>
<dbReference type="IntAct" id="P00546">
    <property type="interactions" value="90"/>
</dbReference>
<dbReference type="MINT" id="P00546"/>
<dbReference type="STRING" id="4932.YBR160W"/>
<dbReference type="BindingDB" id="P00546"/>
<dbReference type="ChEMBL" id="CHEMBL5213"/>
<dbReference type="MoonDB" id="P00546">
    <property type="type" value="Predicted"/>
</dbReference>
<dbReference type="iPTMnet" id="P00546"/>
<dbReference type="PaxDb" id="4932-YBR160W"/>
<dbReference type="PeptideAtlas" id="P00546"/>
<dbReference type="EnsemblFungi" id="YBR160W_mRNA">
    <property type="protein sequence ID" value="YBR160W"/>
    <property type="gene ID" value="YBR160W"/>
</dbReference>
<dbReference type="GeneID" id="852457"/>
<dbReference type="KEGG" id="sce:YBR160W"/>
<dbReference type="AGR" id="SGD:S000000364"/>
<dbReference type="SGD" id="S000000364">
    <property type="gene designation" value="CDC28"/>
</dbReference>
<dbReference type="VEuPathDB" id="FungiDB:YBR160W"/>
<dbReference type="eggNOG" id="KOG0594">
    <property type="taxonomic scope" value="Eukaryota"/>
</dbReference>
<dbReference type="GeneTree" id="ENSGT00940000153335"/>
<dbReference type="HOGENOM" id="CLU_000288_181_1_1"/>
<dbReference type="InParanoid" id="P00546"/>
<dbReference type="OMA" id="YLYQITR"/>
<dbReference type="OrthoDB" id="1732493at2759"/>
<dbReference type="BioCyc" id="YEAST:G3O-29110-MONOMER"/>
<dbReference type="BRENDA" id="2.7.11.22">
    <property type="organism ID" value="984"/>
</dbReference>
<dbReference type="Reactome" id="R-SCE-176187">
    <property type="pathway name" value="Activation of ATR in response to replication stress"/>
</dbReference>
<dbReference type="Reactome" id="R-SCE-68962">
    <property type="pathway name" value="Activation of the pre-replicative complex"/>
</dbReference>
<dbReference type="BioGRID-ORCS" id="852457">
    <property type="hits" value="1 hit in 13 CRISPR screens"/>
</dbReference>
<dbReference type="CD-CODE" id="A777E0F8">
    <property type="entry name" value="P-body"/>
</dbReference>
<dbReference type="CD-CODE" id="E03F929F">
    <property type="entry name" value="Stress granule"/>
</dbReference>
<dbReference type="PRO" id="PR:P00546"/>
<dbReference type="Proteomes" id="UP000002311">
    <property type="component" value="Chromosome II"/>
</dbReference>
<dbReference type="RNAct" id="P00546">
    <property type="molecule type" value="protein"/>
</dbReference>
<dbReference type="GO" id="GO:0005935">
    <property type="term" value="C:cellular bud neck"/>
    <property type="evidence" value="ECO:0000314"/>
    <property type="project" value="SGD"/>
</dbReference>
<dbReference type="GO" id="GO:0000307">
    <property type="term" value="C:cyclin-dependent protein kinase holoenzyme complex"/>
    <property type="evidence" value="ECO:0000314"/>
    <property type="project" value="SGD"/>
</dbReference>
<dbReference type="GO" id="GO:0005737">
    <property type="term" value="C:cytoplasm"/>
    <property type="evidence" value="ECO:0000314"/>
    <property type="project" value="SGD"/>
</dbReference>
<dbReference type="GO" id="GO:0010494">
    <property type="term" value="C:cytoplasmic stress granule"/>
    <property type="evidence" value="ECO:0007005"/>
    <property type="project" value="SGD"/>
</dbReference>
<dbReference type="GO" id="GO:0005783">
    <property type="term" value="C:endoplasmic reticulum"/>
    <property type="evidence" value="ECO:0000314"/>
    <property type="project" value="SGD"/>
</dbReference>
<dbReference type="GO" id="GO:0005634">
    <property type="term" value="C:nucleus"/>
    <property type="evidence" value="ECO:0000314"/>
    <property type="project" value="SGD"/>
</dbReference>
<dbReference type="GO" id="GO:0005524">
    <property type="term" value="F:ATP binding"/>
    <property type="evidence" value="ECO:0007669"/>
    <property type="project" value="UniProtKB-KW"/>
</dbReference>
<dbReference type="GO" id="GO:0030332">
    <property type="term" value="F:cyclin binding"/>
    <property type="evidence" value="ECO:0000318"/>
    <property type="project" value="GO_Central"/>
</dbReference>
<dbReference type="GO" id="GO:0004693">
    <property type="term" value="F:cyclin-dependent protein serine/threonine kinase activity"/>
    <property type="evidence" value="ECO:0000314"/>
    <property type="project" value="SGD"/>
</dbReference>
<dbReference type="GO" id="GO:0042393">
    <property type="term" value="F:histone binding"/>
    <property type="evidence" value="ECO:0000314"/>
    <property type="project" value="SGD"/>
</dbReference>
<dbReference type="GO" id="GO:0004672">
    <property type="term" value="F:protein kinase activity"/>
    <property type="evidence" value="ECO:0007005"/>
    <property type="project" value="SGD"/>
</dbReference>
<dbReference type="GO" id="GO:0106310">
    <property type="term" value="F:protein serine kinase activity"/>
    <property type="evidence" value="ECO:0007669"/>
    <property type="project" value="RHEA"/>
</dbReference>
<dbReference type="GO" id="GO:0004674">
    <property type="term" value="F:protein serine/threonine kinase activity"/>
    <property type="evidence" value="ECO:0000314"/>
    <property type="project" value="UniProtKB"/>
</dbReference>
<dbReference type="GO" id="GO:0000993">
    <property type="term" value="F:RNA polymerase II complex binding"/>
    <property type="evidence" value="ECO:0000314"/>
    <property type="project" value="SGD"/>
</dbReference>
<dbReference type="GO" id="GO:0006370">
    <property type="term" value="P:7-methylguanosine mRNA capping"/>
    <property type="evidence" value="ECO:0000315"/>
    <property type="project" value="SGD"/>
</dbReference>
<dbReference type="GO" id="GO:0051301">
    <property type="term" value="P:cell division"/>
    <property type="evidence" value="ECO:0007669"/>
    <property type="project" value="UniProtKB-KW"/>
</dbReference>
<dbReference type="GO" id="GO:0006974">
    <property type="term" value="P:DNA damage response"/>
    <property type="evidence" value="ECO:0000314"/>
    <property type="project" value="ComplexPortal"/>
</dbReference>
<dbReference type="GO" id="GO:0000729">
    <property type="term" value="P:DNA double-strand break processing"/>
    <property type="evidence" value="ECO:0000315"/>
    <property type="project" value="SGD"/>
</dbReference>
<dbReference type="GO" id="GO:0006303">
    <property type="term" value="P:double-strand break repair via nonhomologous end joining"/>
    <property type="evidence" value="ECO:0000315"/>
    <property type="project" value="SGD"/>
</dbReference>
<dbReference type="GO" id="GO:0000082">
    <property type="term" value="P:G1/S transition of mitotic cell cycle"/>
    <property type="evidence" value="ECO:0000314"/>
    <property type="project" value="SGD"/>
</dbReference>
<dbReference type="GO" id="GO:0000086">
    <property type="term" value="P:G2/M transition of mitotic cell cycle"/>
    <property type="evidence" value="ECO:0000314"/>
    <property type="project" value="SGD"/>
</dbReference>
<dbReference type="GO" id="GO:0000706">
    <property type="term" value="P:meiotic DNA double-strand break processing"/>
    <property type="evidence" value="ECO:0000316"/>
    <property type="project" value="SGD"/>
</dbReference>
<dbReference type="GO" id="GO:0000278">
    <property type="term" value="P:mitotic cell cycle"/>
    <property type="evidence" value="ECO:0000315"/>
    <property type="project" value="SGD"/>
</dbReference>
<dbReference type="GO" id="GO:1990758">
    <property type="term" value="P:mitotic sister chromatid biorientation"/>
    <property type="evidence" value="ECO:0000316"/>
    <property type="project" value="SGD"/>
</dbReference>
<dbReference type="GO" id="GO:0090307">
    <property type="term" value="P:mitotic spindle assembly"/>
    <property type="evidence" value="ECO:0000316"/>
    <property type="project" value="SGD"/>
</dbReference>
<dbReference type="GO" id="GO:0045892">
    <property type="term" value="P:negative regulation of DNA-templated transcription"/>
    <property type="evidence" value="ECO:0000314"/>
    <property type="project" value="SGD"/>
</dbReference>
<dbReference type="GO" id="GO:2001033">
    <property type="term" value="P:negative regulation of double-strand break repair via nonhomologous end joining"/>
    <property type="evidence" value="ECO:0000315"/>
    <property type="project" value="SGD"/>
</dbReference>
<dbReference type="GO" id="GO:0051447">
    <property type="term" value="P:negative regulation of meiotic cell cycle"/>
    <property type="evidence" value="ECO:0000315"/>
    <property type="project" value="SGD"/>
</dbReference>
<dbReference type="GO" id="GO:1903500">
    <property type="term" value="P:negative regulation of mitotic actomyosin contractile ring assembly"/>
    <property type="evidence" value="ECO:0000315"/>
    <property type="project" value="SGD"/>
</dbReference>
<dbReference type="GO" id="GO:0045930">
    <property type="term" value="P:negative regulation of mitotic cell cycle"/>
    <property type="evidence" value="ECO:0000314"/>
    <property type="project" value="SGD"/>
</dbReference>
<dbReference type="GO" id="GO:0045875">
    <property type="term" value="P:negative regulation of sister chromatid cohesion"/>
    <property type="evidence" value="ECO:0000315"/>
    <property type="project" value="SGD"/>
</dbReference>
<dbReference type="GO" id="GO:0000122">
    <property type="term" value="P:negative regulation of transcription by RNA polymerase II"/>
    <property type="evidence" value="ECO:0000315"/>
    <property type="project" value="SGD"/>
</dbReference>
<dbReference type="GO" id="GO:0045893">
    <property type="term" value="P:positive regulation of DNA-templated transcription"/>
    <property type="evidence" value="ECO:0000314"/>
    <property type="project" value="SGD"/>
</dbReference>
<dbReference type="GO" id="GO:1905168">
    <property type="term" value="P:positive regulation of double-strand break repair via homologous recombination"/>
    <property type="evidence" value="ECO:0000315"/>
    <property type="project" value="SGD"/>
</dbReference>
<dbReference type="GO" id="GO:0045819">
    <property type="term" value="P:positive regulation of glycogen catabolic process"/>
    <property type="evidence" value="ECO:0000315"/>
    <property type="project" value="SGD"/>
</dbReference>
<dbReference type="GO" id="GO:0051446">
    <property type="term" value="P:positive regulation of meiotic cell cycle"/>
    <property type="evidence" value="ECO:0000314"/>
    <property type="project" value="SGD"/>
</dbReference>
<dbReference type="GO" id="GO:0045931">
    <property type="term" value="P:positive regulation of mitotic cell cycle"/>
    <property type="evidence" value="ECO:0000315"/>
    <property type="project" value="SGD"/>
</dbReference>
<dbReference type="GO" id="GO:1904291">
    <property type="term" value="P:positive regulation of mitotic DNA damage checkpoint"/>
    <property type="evidence" value="ECO:0000315"/>
    <property type="project" value="SGD"/>
</dbReference>
<dbReference type="GO" id="GO:0010696">
    <property type="term" value="P:positive regulation of mitotic spindle pole body separation"/>
    <property type="evidence" value="ECO:0000315"/>
    <property type="project" value="SGD"/>
</dbReference>
<dbReference type="GO" id="GO:0010571">
    <property type="term" value="P:positive regulation of nuclear cell cycle DNA replication"/>
    <property type="evidence" value="ECO:0000314"/>
    <property type="project" value="SGD"/>
</dbReference>
<dbReference type="GO" id="GO:0045944">
    <property type="term" value="P:positive regulation of transcription by RNA polymerase II"/>
    <property type="evidence" value="ECO:0000315"/>
    <property type="project" value="SGD"/>
</dbReference>
<dbReference type="GO" id="GO:1901319">
    <property type="term" value="P:positive regulation of trehalose catabolic process"/>
    <property type="evidence" value="ECO:0000315"/>
    <property type="project" value="SGD"/>
</dbReference>
<dbReference type="GO" id="GO:0010898">
    <property type="term" value="P:positive regulation of triglyceride catabolic process"/>
    <property type="evidence" value="ECO:0000315"/>
    <property type="project" value="SGD"/>
</dbReference>
<dbReference type="GO" id="GO:0006892">
    <property type="term" value="P:post-Golgi vesicle-mediated transport"/>
    <property type="evidence" value="ECO:0000315"/>
    <property type="project" value="SGD"/>
</dbReference>
<dbReference type="GO" id="GO:0030163">
    <property type="term" value="P:protein catabolic process"/>
    <property type="evidence" value="ECO:0000315"/>
    <property type="project" value="SGD"/>
</dbReference>
<dbReference type="GO" id="GO:1990139">
    <property type="term" value="P:protein localization to nuclear periphery"/>
    <property type="evidence" value="ECO:0000315"/>
    <property type="project" value="SGD"/>
</dbReference>
<dbReference type="GO" id="GO:0034504">
    <property type="term" value="P:protein localization to nucleus"/>
    <property type="evidence" value="ECO:0000315"/>
    <property type="project" value="SGD"/>
</dbReference>
<dbReference type="GO" id="GO:1902889">
    <property type="term" value="P:protein localization to spindle microtubule"/>
    <property type="evidence" value="ECO:0000315"/>
    <property type="project" value="SGD"/>
</dbReference>
<dbReference type="GO" id="GO:0006468">
    <property type="term" value="P:protein phosphorylation"/>
    <property type="evidence" value="ECO:0000314"/>
    <property type="project" value="CACAO"/>
</dbReference>
<dbReference type="GO" id="GO:0010568">
    <property type="term" value="P:regulation of budding cell apical bud growth"/>
    <property type="evidence" value="ECO:0000315"/>
    <property type="project" value="SGD"/>
</dbReference>
<dbReference type="GO" id="GO:1902806">
    <property type="term" value="P:regulation of cell cycle G1/S phase transition"/>
    <property type="evidence" value="ECO:0000303"/>
    <property type="project" value="ComplexPortal"/>
</dbReference>
<dbReference type="GO" id="GO:1902275">
    <property type="term" value="P:regulation of chromatin organization"/>
    <property type="evidence" value="ECO:0000353"/>
    <property type="project" value="UniProtKB"/>
</dbReference>
<dbReference type="GO" id="GO:0006355">
    <property type="term" value="P:regulation of DNA-templated transcription"/>
    <property type="evidence" value="ECO:0000315"/>
    <property type="project" value="ComplexPortal"/>
</dbReference>
<dbReference type="GO" id="GO:0010570">
    <property type="term" value="P:regulation of filamentous growth"/>
    <property type="evidence" value="ECO:0000315"/>
    <property type="project" value="SGD"/>
</dbReference>
<dbReference type="GO" id="GO:0010389">
    <property type="term" value="P:regulation of G2/M transition of mitotic cell cycle"/>
    <property type="evidence" value="ECO:0000318"/>
    <property type="project" value="GO_Central"/>
</dbReference>
<dbReference type="GO" id="GO:0010468">
    <property type="term" value="P:regulation of gene expression"/>
    <property type="evidence" value="ECO:0000318"/>
    <property type="project" value="GO_Central"/>
</dbReference>
<dbReference type="GO" id="GO:0032880">
    <property type="term" value="P:regulation of protein localization"/>
    <property type="evidence" value="ECO:0000315"/>
    <property type="project" value="SGD"/>
</dbReference>
<dbReference type="GO" id="GO:1905634">
    <property type="term" value="P:regulation of protein localization to chromatin"/>
    <property type="evidence" value="ECO:0000314"/>
    <property type="project" value="SGD"/>
</dbReference>
<dbReference type="GO" id="GO:0090169">
    <property type="term" value="P:regulation of spindle assembly"/>
    <property type="evidence" value="ECO:0000315"/>
    <property type="project" value="SGD"/>
</dbReference>
<dbReference type="GO" id="GO:0032210">
    <property type="term" value="P:regulation of telomere maintenance via telomerase"/>
    <property type="evidence" value="ECO:0000316"/>
    <property type="project" value="SGD"/>
</dbReference>
<dbReference type="GO" id="GO:0007165">
    <property type="term" value="P:signal transduction"/>
    <property type="evidence" value="ECO:0000318"/>
    <property type="project" value="GO_Central"/>
</dbReference>
<dbReference type="GO" id="GO:0007130">
    <property type="term" value="P:synaptonemal complex assembly"/>
    <property type="evidence" value="ECO:0000315"/>
    <property type="project" value="SGD"/>
</dbReference>
<dbReference type="CDD" id="cd07835">
    <property type="entry name" value="STKc_CDK1_CdkB_like"/>
    <property type="match status" value="1"/>
</dbReference>
<dbReference type="FunFam" id="1.10.510.10:FF:000144">
    <property type="entry name" value="Cyclin-dependent kinase 2"/>
    <property type="match status" value="1"/>
</dbReference>
<dbReference type="FunFam" id="3.30.200.20:FF:000027">
    <property type="entry name" value="Putative Cyclin-dependent kinase 1"/>
    <property type="match status" value="1"/>
</dbReference>
<dbReference type="Gene3D" id="3.30.200.20">
    <property type="entry name" value="Phosphorylase Kinase, domain 1"/>
    <property type="match status" value="1"/>
</dbReference>
<dbReference type="Gene3D" id="1.10.510.10">
    <property type="entry name" value="Transferase(Phosphotransferase) domain 1"/>
    <property type="match status" value="1"/>
</dbReference>
<dbReference type="InterPro" id="IPR050108">
    <property type="entry name" value="CDK"/>
</dbReference>
<dbReference type="InterPro" id="IPR011009">
    <property type="entry name" value="Kinase-like_dom_sf"/>
</dbReference>
<dbReference type="InterPro" id="IPR000719">
    <property type="entry name" value="Prot_kinase_dom"/>
</dbReference>
<dbReference type="InterPro" id="IPR017441">
    <property type="entry name" value="Protein_kinase_ATP_BS"/>
</dbReference>
<dbReference type="InterPro" id="IPR008271">
    <property type="entry name" value="Ser/Thr_kinase_AS"/>
</dbReference>
<dbReference type="PANTHER" id="PTHR24056">
    <property type="entry name" value="CELL DIVISION PROTEIN KINASE"/>
    <property type="match status" value="1"/>
</dbReference>
<dbReference type="PANTHER" id="PTHR24056:SF254">
    <property type="entry name" value="CYCLIN-DEPENDENT KINASE 2"/>
    <property type="match status" value="1"/>
</dbReference>
<dbReference type="Pfam" id="PF00069">
    <property type="entry name" value="Pkinase"/>
    <property type="match status" value="1"/>
</dbReference>
<dbReference type="SMART" id="SM00220">
    <property type="entry name" value="S_TKc"/>
    <property type="match status" value="1"/>
</dbReference>
<dbReference type="SUPFAM" id="SSF56112">
    <property type="entry name" value="Protein kinase-like (PK-like)"/>
    <property type="match status" value="1"/>
</dbReference>
<dbReference type="PROSITE" id="PS00107">
    <property type="entry name" value="PROTEIN_KINASE_ATP"/>
    <property type="match status" value="1"/>
</dbReference>
<dbReference type="PROSITE" id="PS50011">
    <property type="entry name" value="PROTEIN_KINASE_DOM"/>
    <property type="match status" value="1"/>
</dbReference>
<dbReference type="PROSITE" id="PS00108">
    <property type="entry name" value="PROTEIN_KINASE_ST"/>
    <property type="match status" value="1"/>
</dbReference>
<name>CDK1_YEAST</name>
<accession>P00546</accession>
<accession>D6VQF5</accession>
<proteinExistence type="evidence at protein level"/>
<protein>
    <recommendedName>
        <fullName evidence="11">Cyclin-dependent kinase 1</fullName>
        <shortName evidence="11">CDK1</shortName>
        <ecNumber evidence="1">2.7.11.22</ecNumber>
    </recommendedName>
    <alternativeName>
        <fullName>Cell division control protein 28</fullName>
    </alternativeName>
    <alternativeName>
        <fullName>Cell division protein kinase 1</fullName>
    </alternativeName>
</protein>
<organism>
    <name type="scientific">Saccharomyces cerevisiae (strain ATCC 204508 / S288c)</name>
    <name type="common">Baker's yeast</name>
    <dbReference type="NCBI Taxonomy" id="559292"/>
    <lineage>
        <taxon>Eukaryota</taxon>
        <taxon>Fungi</taxon>
        <taxon>Dikarya</taxon>
        <taxon>Ascomycota</taxon>
        <taxon>Saccharomycotina</taxon>
        <taxon>Saccharomycetes</taxon>
        <taxon>Saccharomycetales</taxon>
        <taxon>Saccharomycetaceae</taxon>
        <taxon>Saccharomyces</taxon>
    </lineage>
</organism>
<reference key="1">
    <citation type="journal article" date="1984" name="Nature">
        <title>Primary structure homology between the product of yeast cell division control gene CDC28 and vertebrate oncogenes.</title>
        <authorList>
            <person name="Lorincz A.T."/>
            <person name="Reed S.I."/>
        </authorList>
    </citation>
    <scope>NUCLEOTIDE SEQUENCE [GENOMIC DNA]</scope>
</reference>
<reference key="2">
    <citation type="journal article" date="1995" name="Yeast">
        <title>Sequence analysis of a 5.6 kb fragment of chromosome II from Saccharomyces cerevisiae reveals two new open reading frames next to CDC28.</title>
        <authorList>
            <person name="Baur S."/>
            <person name="Becker J."/>
            <person name="Li Z."/>
            <person name="Niegemann E."/>
            <person name="Wehner E."/>
            <person name="Wolter R."/>
            <person name="Brendel M."/>
        </authorList>
    </citation>
    <scope>NUCLEOTIDE SEQUENCE [GENOMIC DNA]</scope>
    <source>
        <strain>ATCC 204508 / S288c</strain>
    </source>
</reference>
<reference key="3">
    <citation type="journal article" date="1994" name="EMBO J.">
        <title>Complete DNA sequence of yeast chromosome II.</title>
        <authorList>
            <person name="Feldmann H."/>
            <person name="Aigle M."/>
            <person name="Aljinovic G."/>
            <person name="Andre B."/>
            <person name="Baclet M.C."/>
            <person name="Barthe C."/>
            <person name="Baur A."/>
            <person name="Becam A.-M."/>
            <person name="Biteau N."/>
            <person name="Boles E."/>
            <person name="Brandt T."/>
            <person name="Brendel M."/>
            <person name="Brueckner M."/>
            <person name="Bussereau F."/>
            <person name="Christiansen C."/>
            <person name="Contreras R."/>
            <person name="Crouzet M."/>
            <person name="Cziepluch C."/>
            <person name="Demolis N."/>
            <person name="Delaveau T."/>
            <person name="Doignon F."/>
            <person name="Domdey H."/>
            <person name="Duesterhus S."/>
            <person name="Dubois E."/>
            <person name="Dujon B."/>
            <person name="El Bakkoury M."/>
            <person name="Entian K.-D."/>
            <person name="Feuermann M."/>
            <person name="Fiers W."/>
            <person name="Fobo G.M."/>
            <person name="Fritz C."/>
            <person name="Gassenhuber J."/>
            <person name="Glansdorff N."/>
            <person name="Goffeau A."/>
            <person name="Grivell L.A."/>
            <person name="de Haan M."/>
            <person name="Hein C."/>
            <person name="Herbert C.J."/>
            <person name="Hollenberg C.P."/>
            <person name="Holmstroem K."/>
            <person name="Jacq C."/>
            <person name="Jacquet M."/>
            <person name="Jauniaux J.-C."/>
            <person name="Jonniaux J.-L."/>
            <person name="Kallesoee T."/>
            <person name="Kiesau P."/>
            <person name="Kirchrath L."/>
            <person name="Koetter P."/>
            <person name="Korol S."/>
            <person name="Liebl S."/>
            <person name="Logghe M."/>
            <person name="Lohan A.J.E."/>
            <person name="Louis E.J."/>
            <person name="Li Z.Y."/>
            <person name="Maat M.J."/>
            <person name="Mallet L."/>
            <person name="Mannhaupt G."/>
            <person name="Messenguy F."/>
            <person name="Miosga T."/>
            <person name="Molemans F."/>
            <person name="Mueller S."/>
            <person name="Nasr F."/>
            <person name="Obermaier B."/>
            <person name="Perea J."/>
            <person name="Pierard A."/>
            <person name="Piravandi E."/>
            <person name="Pohl F.M."/>
            <person name="Pohl T.M."/>
            <person name="Potier S."/>
            <person name="Proft M."/>
            <person name="Purnelle B."/>
            <person name="Ramezani Rad M."/>
            <person name="Rieger M."/>
            <person name="Rose M."/>
            <person name="Schaaff-Gerstenschlaeger I."/>
            <person name="Scherens B."/>
            <person name="Schwarzlose C."/>
            <person name="Skala J."/>
            <person name="Slonimski P.P."/>
            <person name="Smits P.H.M."/>
            <person name="Souciet J.-L."/>
            <person name="Steensma H.Y."/>
            <person name="Stucka R."/>
            <person name="Urrestarazu L.A."/>
            <person name="van der Aart Q.J.M."/>
            <person name="Van Dyck L."/>
            <person name="Vassarotti A."/>
            <person name="Vetter I."/>
            <person name="Vierendeels F."/>
            <person name="Vissers S."/>
            <person name="Wagner G."/>
            <person name="de Wergifosse P."/>
            <person name="Wolfe K.H."/>
            <person name="Zagulski M."/>
            <person name="Zimmermann F.K."/>
            <person name="Mewes H.-W."/>
            <person name="Kleine K."/>
        </authorList>
    </citation>
    <scope>NUCLEOTIDE SEQUENCE [LARGE SCALE GENOMIC DNA]</scope>
    <source>
        <strain>ATCC 204508 / S288c</strain>
    </source>
</reference>
<reference key="4">
    <citation type="journal article" date="2014" name="G3 (Bethesda)">
        <title>The reference genome sequence of Saccharomyces cerevisiae: Then and now.</title>
        <authorList>
            <person name="Engel S.R."/>
            <person name="Dietrich F.S."/>
            <person name="Fisk D.G."/>
            <person name="Binkley G."/>
            <person name="Balakrishnan R."/>
            <person name="Costanzo M.C."/>
            <person name="Dwight S.S."/>
            <person name="Hitz B.C."/>
            <person name="Karra K."/>
            <person name="Nash R.S."/>
            <person name="Weng S."/>
            <person name="Wong E.D."/>
            <person name="Lloyd P."/>
            <person name="Skrzypek M.S."/>
            <person name="Miyasato S.R."/>
            <person name="Simison M."/>
            <person name="Cherry J.M."/>
        </authorList>
    </citation>
    <scope>GENOME REANNOTATION</scope>
    <source>
        <strain>ATCC 204508 / S288c</strain>
    </source>
</reference>
<reference key="5">
    <citation type="journal article" date="2003" name="Nature">
        <title>Global analysis of protein expression in yeast.</title>
        <authorList>
            <person name="Ghaemmaghami S."/>
            <person name="Huh W.-K."/>
            <person name="Bower K."/>
            <person name="Howson R.W."/>
            <person name="Belle A."/>
            <person name="Dephoure N."/>
            <person name="O'Shea E.K."/>
            <person name="Weissman J.S."/>
        </authorList>
    </citation>
    <scope>LEVEL OF PROTEIN EXPRESSION [LARGE SCALE ANALYSIS]</scope>
</reference>
<reference key="6">
    <citation type="journal article" date="1989" name="Mol. Cell. Biol.">
        <title>The Saccharomyces cerevisiae CKS1 gene, a homolog of the Schizosaccharomyces pombe suc1+ gene, encodes a subunit of the Cdc28 protein kinase complex.</title>
        <authorList>
            <person name="Hadwiger J.A."/>
            <person name="Wittenberg C."/>
            <person name="Mendenhall M.D."/>
            <person name="Reed S.I."/>
        </authorList>
    </citation>
    <scope>FUNCTION</scope>
    <scope>INTERACTION WITH CKS1</scope>
</reference>
<reference key="7">
    <citation type="journal article" date="2003" name="Nature">
        <title>Targets of the cyclin-dependent kinase Cdk1.</title>
        <authorList>
            <person name="Ubersax J.A."/>
            <person name="Woodbury E.L."/>
            <person name="Quang P.N."/>
            <person name="Paraz M."/>
            <person name="Blethrow J.D."/>
            <person name="Shah K."/>
            <person name="Shokat K.M."/>
            <person name="Morgan D.O."/>
        </authorList>
    </citation>
    <scope>FUNCTION</scope>
</reference>
<reference key="8">
    <citation type="journal article" date="2005" name="Mol. Cell. Proteomics">
        <title>Quantitative phosphoproteomics applied to the yeast pheromone signaling pathway.</title>
        <authorList>
            <person name="Gruhler A."/>
            <person name="Olsen J.V."/>
            <person name="Mohammed S."/>
            <person name="Mortensen P."/>
            <person name="Faergeman N.J."/>
            <person name="Mann M."/>
            <person name="Jensen O.N."/>
        </authorList>
    </citation>
    <scope>IDENTIFICATION BY MASS SPECTROMETRY [LARGE SCALE ANALYSIS]</scope>
    <source>
        <strain>YAL6B</strain>
    </source>
</reference>
<reference key="9">
    <citation type="journal article" date="2007" name="J. Proteome Res.">
        <title>Large-scale phosphorylation analysis of alpha-factor-arrested Saccharomyces cerevisiae.</title>
        <authorList>
            <person name="Li X."/>
            <person name="Gerber S.A."/>
            <person name="Rudner A.D."/>
            <person name="Beausoleil S.A."/>
            <person name="Haas W."/>
            <person name="Villen J."/>
            <person name="Elias J.E."/>
            <person name="Gygi S.P."/>
        </authorList>
    </citation>
    <scope>IDENTIFICATION BY MASS SPECTROMETRY [LARGE SCALE ANALYSIS]</scope>
    <source>
        <strain>ADR376</strain>
    </source>
</reference>
<reference key="10">
    <citation type="journal article" date="2009" name="Science">
        <title>Global analysis of Cdk1 substrate phosphorylation sites provides insights into evolution.</title>
        <authorList>
            <person name="Holt L.J."/>
            <person name="Tuch B.B."/>
            <person name="Villen J."/>
            <person name="Johnson A.D."/>
            <person name="Gygi S.P."/>
            <person name="Morgan D.O."/>
        </authorList>
    </citation>
    <scope>PHOSPHORYLATION [LARGE SCALE ANALYSIS] AT TYR-19 AND THR-169</scope>
    <scope>IDENTIFICATION BY MASS SPECTROMETRY [LARGE SCALE ANALYSIS]</scope>
</reference>
<reference key="11">
    <citation type="journal article" date="2011" name="Genes Dev.">
        <title>Restriction of histone gene transcription to S phase by phosphorylation of a chromatin boundary protein.</title>
        <authorList>
            <person name="Kurat C.F."/>
            <person name="Lambert J.P."/>
            <person name="van Dyk D."/>
            <person name="Tsui K."/>
            <person name="van Bakel H."/>
            <person name="Kaluarachchi S."/>
            <person name="Friesen H."/>
            <person name="Kainth P."/>
            <person name="Nislow C."/>
            <person name="Figeys D."/>
            <person name="Fillingham J."/>
            <person name="Andrews B.J."/>
        </authorList>
    </citation>
    <scope>FUNCTION</scope>
</reference>
<reference key="12">
    <citation type="journal article" date="2012" name="Proc. Natl. Acad. Sci. U.S.A.">
        <title>N-terminal acetylome analyses and functional insights of the N-terminal acetyltransferase NatB.</title>
        <authorList>
            <person name="Van Damme P."/>
            <person name="Lasa M."/>
            <person name="Polevoda B."/>
            <person name="Gazquez C."/>
            <person name="Elosegui-Artola A."/>
            <person name="Kim D.S."/>
            <person name="De Juan-Pardo E."/>
            <person name="Demeyer K."/>
            <person name="Hole K."/>
            <person name="Larrea E."/>
            <person name="Timmerman E."/>
            <person name="Prieto J."/>
            <person name="Arnesen T."/>
            <person name="Sherman F."/>
            <person name="Gevaert K."/>
            <person name="Aldabe R."/>
        </authorList>
    </citation>
    <scope>ACETYLATION [LARGE SCALE ANALYSIS] AT SER-2</scope>
    <scope>CLEAVAGE OF INITIATOR METHIONINE [LARGE SCALE ANALYSIS]</scope>
    <scope>IDENTIFICATION BY MASS SPECTROMETRY [LARGE SCALE ANALYSIS]</scope>
</reference>
<reference key="13">
    <citation type="journal article" date="2012" name="Nat. Cell Biol.">
        <title>Cnn1 inhibits the interactions between the KMN complexes of the yeast kinetochore.</title>
        <authorList>
            <person name="Bock L.J."/>
            <person name="Pagliuca C."/>
            <person name="Kobayashi N."/>
            <person name="Grove R.A."/>
            <person name="Oku Y."/>
            <person name="Shrestha K."/>
            <person name="Alfieri C."/>
            <person name="Golfieri C."/>
            <person name="Oldani A."/>
            <person name="Dal Maschio M."/>
            <person name="Bermejo R."/>
            <person name="Hazbun T.R."/>
            <person name="Tanaka T.U."/>
            <person name="De Wulf P."/>
        </authorList>
    </citation>
    <scope>FUNCTION</scope>
</reference>
<keyword id="KW-0007">Acetylation</keyword>
<keyword id="KW-0067">ATP-binding</keyword>
<keyword id="KW-0131">Cell cycle</keyword>
<keyword id="KW-0132">Cell division</keyword>
<keyword id="KW-0418">Kinase</keyword>
<keyword id="KW-0498">Mitosis</keyword>
<keyword id="KW-0547">Nucleotide-binding</keyword>
<keyword id="KW-0597">Phosphoprotein</keyword>
<keyword id="KW-1185">Reference proteome</keyword>
<keyword id="KW-0723">Serine/threonine-protein kinase</keyword>
<keyword id="KW-0808">Transferase</keyword>